<keyword id="KW-0210">Decarboxylase</keyword>
<keyword id="KW-0444">Lipid biosynthesis</keyword>
<keyword id="KW-0443">Lipid metabolism</keyword>
<keyword id="KW-0456">Lyase</keyword>
<keyword id="KW-0594">Phospholipid biosynthesis</keyword>
<keyword id="KW-1208">Phospholipid metabolism</keyword>
<keyword id="KW-0670">Pyruvate</keyword>
<accession>Q44558</accession>
<proteinExistence type="inferred from homology"/>
<dbReference type="EC" id="4.1.1.65"/>
<dbReference type="EMBL" id="L42346">
    <property type="protein sequence ID" value="AAB03238.1"/>
    <property type="molecule type" value="Genomic_DNA"/>
</dbReference>
<dbReference type="PIR" id="S62189">
    <property type="entry name" value="S62189"/>
</dbReference>
<dbReference type="SMR" id="Q44558"/>
<dbReference type="UniPathway" id="UPA00558">
    <property type="reaction ID" value="UER00616"/>
</dbReference>
<dbReference type="GO" id="GO:0004609">
    <property type="term" value="F:phosphatidylserine decarboxylase activity"/>
    <property type="evidence" value="ECO:0007669"/>
    <property type="project" value="UniProtKB-EC"/>
</dbReference>
<dbReference type="GO" id="GO:0006646">
    <property type="term" value="P:phosphatidylethanolamine biosynthetic process"/>
    <property type="evidence" value="ECO:0007669"/>
    <property type="project" value="UniProtKB-UniPathway"/>
</dbReference>
<gene>
    <name type="primary">psd</name>
</gene>
<reference key="1">
    <citation type="journal article" date="1996" name="Eur. J. Biochem.">
        <title>Cloning, sequence analysis and overexpression of the rhodanese gene of Azotobacter vinelandii.</title>
        <authorList>
            <person name="Colnaghi R."/>
            <person name="Pagani S."/>
            <person name="Kennedy C."/>
            <person name="Drummond M."/>
        </authorList>
    </citation>
    <scope>NUCLEOTIDE SEQUENCE [GENOMIC DNA]</scope>
    <source>
        <strain>OP / UW136</strain>
    </source>
</reference>
<sequence>MKDRLFLLGQHLLPHHLLSRAAGRLAECRVPWVKNSLIKAFARHFQVD</sequence>
<feature type="chain" id="PRO_0000029618" description="Phosphatidylserine decarboxylase beta chain" evidence="1">
    <location>
        <begin position="1"/>
        <end position="48" status="greater than"/>
    </location>
</feature>
<feature type="non-terminal residue">
    <location>
        <position position="48"/>
    </location>
</feature>
<organism>
    <name type="scientific">Azotobacter vinelandii</name>
    <dbReference type="NCBI Taxonomy" id="354"/>
    <lineage>
        <taxon>Bacteria</taxon>
        <taxon>Pseudomonadati</taxon>
        <taxon>Pseudomonadota</taxon>
        <taxon>Gammaproteobacteria</taxon>
        <taxon>Pseudomonadales</taxon>
        <taxon>Pseudomonadaceae</taxon>
        <taxon>Azotobacter</taxon>
    </lineage>
</organism>
<name>PSD_AZOVI</name>
<protein>
    <recommendedName>
        <fullName>Phosphatidylserine decarboxylase proenzyme</fullName>
        <ecNumber>4.1.1.65</ecNumber>
    </recommendedName>
    <component>
        <recommendedName>
            <fullName>Phosphatidylserine decarboxylase beta chain</fullName>
        </recommendedName>
    </component>
</protein>
<comment type="catalytic activity">
    <reaction>
        <text>a 1,2-diacyl-sn-glycero-3-phospho-L-serine + H(+) = a 1,2-diacyl-sn-glycero-3-phosphoethanolamine + CO2</text>
        <dbReference type="Rhea" id="RHEA:20828"/>
        <dbReference type="ChEBI" id="CHEBI:15378"/>
        <dbReference type="ChEBI" id="CHEBI:16526"/>
        <dbReference type="ChEBI" id="CHEBI:57262"/>
        <dbReference type="ChEBI" id="CHEBI:64612"/>
        <dbReference type="EC" id="4.1.1.65"/>
    </reaction>
</comment>
<comment type="cofactor">
    <cofactor evidence="1">
        <name>pyruvate</name>
        <dbReference type="ChEBI" id="CHEBI:15361"/>
    </cofactor>
    <text evidence="1">Binds 1 pyruvoyl group covalently per subunit.</text>
</comment>
<comment type="pathway">
    <text>Phospholipid metabolism; phosphatidylethanolamine biosynthesis; phosphatidylethanolamine from CDP-diacylglycerol: step 2/2.</text>
</comment>
<comment type="similarity">
    <text evidence="2">Belongs to the phosphatidylserine decarboxylase family. Type 1 subfamily.</text>
</comment>
<evidence type="ECO:0000250" key="1"/>
<evidence type="ECO:0000305" key="2"/>